<organism>
    <name type="scientific">Streptococcus pyogenes serotype M18 (strain MGAS8232)</name>
    <dbReference type="NCBI Taxonomy" id="186103"/>
    <lineage>
        <taxon>Bacteria</taxon>
        <taxon>Bacillati</taxon>
        <taxon>Bacillota</taxon>
        <taxon>Bacilli</taxon>
        <taxon>Lactobacillales</taxon>
        <taxon>Streptococcaceae</taxon>
        <taxon>Streptococcus</taxon>
    </lineage>
</organism>
<dbReference type="EC" id="2.7.2.1" evidence="1"/>
<dbReference type="EMBL" id="AE009949">
    <property type="protein sequence ID" value="AAL96923.1"/>
    <property type="molecule type" value="Genomic_DNA"/>
</dbReference>
<dbReference type="RefSeq" id="WP_002986533.1">
    <property type="nucleotide sequence ID" value="NC_003485.1"/>
</dbReference>
<dbReference type="SMR" id="Q8P2X6"/>
<dbReference type="KEGG" id="spm:spyM18_0111"/>
<dbReference type="HOGENOM" id="CLU_020352_0_1_9"/>
<dbReference type="UniPathway" id="UPA00340">
    <property type="reaction ID" value="UER00458"/>
</dbReference>
<dbReference type="GO" id="GO:0005737">
    <property type="term" value="C:cytoplasm"/>
    <property type="evidence" value="ECO:0007669"/>
    <property type="project" value="UniProtKB-SubCell"/>
</dbReference>
<dbReference type="GO" id="GO:0008776">
    <property type="term" value="F:acetate kinase activity"/>
    <property type="evidence" value="ECO:0007669"/>
    <property type="project" value="UniProtKB-UniRule"/>
</dbReference>
<dbReference type="GO" id="GO:0005524">
    <property type="term" value="F:ATP binding"/>
    <property type="evidence" value="ECO:0007669"/>
    <property type="project" value="UniProtKB-KW"/>
</dbReference>
<dbReference type="GO" id="GO:0000287">
    <property type="term" value="F:magnesium ion binding"/>
    <property type="evidence" value="ECO:0007669"/>
    <property type="project" value="UniProtKB-UniRule"/>
</dbReference>
<dbReference type="GO" id="GO:0006083">
    <property type="term" value="P:acetate metabolic process"/>
    <property type="evidence" value="ECO:0007669"/>
    <property type="project" value="TreeGrafter"/>
</dbReference>
<dbReference type="GO" id="GO:0006085">
    <property type="term" value="P:acetyl-CoA biosynthetic process"/>
    <property type="evidence" value="ECO:0007669"/>
    <property type="project" value="UniProtKB-UniRule"/>
</dbReference>
<dbReference type="CDD" id="cd24010">
    <property type="entry name" value="ASKHA_NBD_AcK_PK"/>
    <property type="match status" value="1"/>
</dbReference>
<dbReference type="Gene3D" id="3.30.420.40">
    <property type="match status" value="2"/>
</dbReference>
<dbReference type="HAMAP" id="MF_00020">
    <property type="entry name" value="Acetate_kinase"/>
    <property type="match status" value="1"/>
</dbReference>
<dbReference type="InterPro" id="IPR004372">
    <property type="entry name" value="Ac/propionate_kinase"/>
</dbReference>
<dbReference type="InterPro" id="IPR000890">
    <property type="entry name" value="Aliphatic_acid_kin_short-chain"/>
</dbReference>
<dbReference type="InterPro" id="IPR023865">
    <property type="entry name" value="Aliphatic_acid_kinase_CS"/>
</dbReference>
<dbReference type="InterPro" id="IPR043129">
    <property type="entry name" value="ATPase_NBD"/>
</dbReference>
<dbReference type="NCBIfam" id="TIGR00016">
    <property type="entry name" value="ackA"/>
    <property type="match status" value="1"/>
</dbReference>
<dbReference type="PANTHER" id="PTHR21060">
    <property type="entry name" value="ACETATE KINASE"/>
    <property type="match status" value="1"/>
</dbReference>
<dbReference type="PANTHER" id="PTHR21060:SF15">
    <property type="entry name" value="ACETATE KINASE-RELATED"/>
    <property type="match status" value="1"/>
</dbReference>
<dbReference type="Pfam" id="PF00871">
    <property type="entry name" value="Acetate_kinase"/>
    <property type="match status" value="1"/>
</dbReference>
<dbReference type="PIRSF" id="PIRSF000722">
    <property type="entry name" value="Acetate_prop_kin"/>
    <property type="match status" value="1"/>
</dbReference>
<dbReference type="PRINTS" id="PR00471">
    <property type="entry name" value="ACETATEKNASE"/>
</dbReference>
<dbReference type="SUPFAM" id="SSF53067">
    <property type="entry name" value="Actin-like ATPase domain"/>
    <property type="match status" value="2"/>
</dbReference>
<dbReference type="PROSITE" id="PS01075">
    <property type="entry name" value="ACETATE_KINASE_1"/>
    <property type="match status" value="1"/>
</dbReference>
<dbReference type="PROSITE" id="PS01076">
    <property type="entry name" value="ACETATE_KINASE_2"/>
    <property type="match status" value="1"/>
</dbReference>
<gene>
    <name evidence="1" type="primary">ackA</name>
    <name type="ordered locus">spyM18_0111</name>
</gene>
<comment type="function">
    <text evidence="1">Catalyzes the formation of acetyl phosphate from acetate and ATP. Can also catalyze the reverse reaction.</text>
</comment>
<comment type="catalytic activity">
    <reaction evidence="1">
        <text>acetate + ATP = acetyl phosphate + ADP</text>
        <dbReference type="Rhea" id="RHEA:11352"/>
        <dbReference type="ChEBI" id="CHEBI:22191"/>
        <dbReference type="ChEBI" id="CHEBI:30089"/>
        <dbReference type="ChEBI" id="CHEBI:30616"/>
        <dbReference type="ChEBI" id="CHEBI:456216"/>
        <dbReference type="EC" id="2.7.2.1"/>
    </reaction>
</comment>
<comment type="cofactor">
    <cofactor evidence="1">
        <name>Mg(2+)</name>
        <dbReference type="ChEBI" id="CHEBI:18420"/>
    </cofactor>
    <cofactor evidence="1">
        <name>Mn(2+)</name>
        <dbReference type="ChEBI" id="CHEBI:29035"/>
    </cofactor>
    <text evidence="1">Mg(2+). Can also accept Mn(2+).</text>
</comment>
<comment type="pathway">
    <text evidence="1">Metabolic intermediate biosynthesis; acetyl-CoA biosynthesis; acetyl-CoA from acetate: step 1/2.</text>
</comment>
<comment type="subunit">
    <text evidence="1">Homodimer.</text>
</comment>
<comment type="subcellular location">
    <subcellularLocation>
        <location evidence="1">Cytoplasm</location>
    </subcellularLocation>
</comment>
<comment type="similarity">
    <text evidence="1">Belongs to the acetokinase family.</text>
</comment>
<name>ACKA_STRP8</name>
<proteinExistence type="inferred from homology"/>
<protein>
    <recommendedName>
        <fullName evidence="1">Acetate kinase</fullName>
        <ecNumber evidence="1">2.7.2.1</ecNumber>
    </recommendedName>
    <alternativeName>
        <fullName evidence="1">Acetokinase</fullName>
    </alternativeName>
</protein>
<feature type="chain" id="PRO_0000107628" description="Acetate kinase">
    <location>
        <begin position="1"/>
        <end position="398"/>
    </location>
</feature>
<feature type="active site" description="Proton donor/acceptor" evidence="1">
    <location>
        <position position="146"/>
    </location>
</feature>
<feature type="binding site" evidence="1">
    <location>
        <position position="8"/>
    </location>
    <ligand>
        <name>Mg(2+)</name>
        <dbReference type="ChEBI" id="CHEBI:18420"/>
    </ligand>
</feature>
<feature type="binding site" evidence="1">
    <location>
        <position position="15"/>
    </location>
    <ligand>
        <name>ATP</name>
        <dbReference type="ChEBI" id="CHEBI:30616"/>
    </ligand>
</feature>
<feature type="binding site" evidence="1">
    <location>
        <position position="89"/>
    </location>
    <ligand>
        <name>substrate</name>
    </ligand>
</feature>
<feature type="binding site" evidence="1">
    <location>
        <begin position="206"/>
        <end position="210"/>
    </location>
    <ligand>
        <name>ATP</name>
        <dbReference type="ChEBI" id="CHEBI:30616"/>
    </ligand>
</feature>
<feature type="binding site" evidence="1">
    <location>
        <begin position="283"/>
        <end position="285"/>
    </location>
    <ligand>
        <name>ATP</name>
        <dbReference type="ChEBI" id="CHEBI:30616"/>
    </ligand>
</feature>
<feature type="binding site" evidence="1">
    <location>
        <begin position="331"/>
        <end position="335"/>
    </location>
    <ligand>
        <name>ATP</name>
        <dbReference type="ChEBI" id="CHEBI:30616"/>
    </ligand>
</feature>
<feature type="binding site" evidence="1">
    <location>
        <position position="383"/>
    </location>
    <ligand>
        <name>Mg(2+)</name>
        <dbReference type="ChEBI" id="CHEBI:18420"/>
    </ligand>
</feature>
<feature type="site" description="Transition state stabilizer" evidence="1">
    <location>
        <position position="178"/>
    </location>
</feature>
<feature type="site" description="Transition state stabilizer" evidence="1">
    <location>
        <position position="239"/>
    </location>
</feature>
<keyword id="KW-0067">ATP-binding</keyword>
<keyword id="KW-0963">Cytoplasm</keyword>
<keyword id="KW-0418">Kinase</keyword>
<keyword id="KW-0460">Magnesium</keyword>
<keyword id="KW-0479">Metal-binding</keyword>
<keyword id="KW-0547">Nucleotide-binding</keyword>
<keyword id="KW-0808">Transferase</keyword>
<reference key="1">
    <citation type="journal article" date="2002" name="Proc. Natl. Acad. Sci. U.S.A.">
        <title>Genome sequence and comparative microarray analysis of serotype M18 group A Streptococcus strains associated with acute rheumatic fever outbreaks.</title>
        <authorList>
            <person name="Smoot J.C."/>
            <person name="Barbian K.D."/>
            <person name="Van Gompel J.J."/>
            <person name="Smoot L.M."/>
            <person name="Chaussee M.S."/>
            <person name="Sylva G.L."/>
            <person name="Sturdevant D.E."/>
            <person name="Ricklefs S.M."/>
            <person name="Porcella S.F."/>
            <person name="Parkins L.D."/>
            <person name="Beres S.B."/>
            <person name="Campbell D.S."/>
            <person name="Smith T.M."/>
            <person name="Zhang Q."/>
            <person name="Kapur V."/>
            <person name="Daly J.A."/>
            <person name="Veasy L.G."/>
            <person name="Musser J.M."/>
        </authorList>
    </citation>
    <scope>NUCLEOTIDE SEQUENCE [LARGE SCALE GENOMIC DNA]</scope>
    <source>
        <strain>MGAS8232</strain>
    </source>
</reference>
<evidence type="ECO:0000255" key="1">
    <source>
        <dbReference type="HAMAP-Rule" id="MF_00020"/>
    </source>
</evidence>
<accession>Q8P2X6</accession>
<sequence length="398" mass="43614">MSKTIAINAGSSSLKWQLYQMPEEEVLAQGIIERIGLKDSISTVKYDGKKEEQILDIHDHTEAVKILLNDLIHFGIIAAYDEITGVGHRVVAGGELFKESVVVNDKVLEHIEELSVLAPLHNPGAAAGIRAFRDILPDITSVCVFDTSFHTSMAKHTYLYPIPQKYYTDYKVRKYGAHGTSHKYVAQEAAKMLGRPLEELKLITAHIGNGVSITANYHGKSVDTSMGFTPLAGPMMGTRSGDIDPAIIPYLIEQDPELKDAADVVNMLNKKSGLSGVSGISSDMRDIEAGLQEDNPDAVLAYNIFIDRIKKCIGQYFAVLNGADALVFTAGMGENAPLMRQDVIGGLTWFGMDIDPEKNVFGYRGDISTPESKVKVLVISTDEELCIARDVERLKNTK</sequence>